<dbReference type="EMBL" id="L36925">
    <property type="protein sequence ID" value="AAA64789.1"/>
    <property type="status" value="ALT_SEQ"/>
    <property type="molecule type" value="Genomic_DNA"/>
</dbReference>
<dbReference type="EMBL" id="AC079829">
    <property type="protein sequence ID" value="AAG50679.1"/>
    <property type="status" value="ALT_SEQ"/>
    <property type="molecule type" value="Genomic_DNA"/>
</dbReference>
<dbReference type="EMBL" id="CP002684">
    <property type="protein sequence ID" value="AEE30674.1"/>
    <property type="molecule type" value="Genomic_DNA"/>
</dbReference>
<dbReference type="EMBL" id="AB493477">
    <property type="protein sequence ID" value="BAH30315.1"/>
    <property type="molecule type" value="mRNA"/>
</dbReference>
<dbReference type="EMBL" id="AF061401">
    <property type="protein sequence ID" value="AAC67505.1"/>
    <property type="status" value="ALT_SEQ"/>
    <property type="molecule type" value="Genomic_DNA"/>
</dbReference>
<dbReference type="EMBL" id="AF061402">
    <property type="protein sequence ID" value="AAC67506.1"/>
    <property type="status" value="ALT_SEQ"/>
    <property type="molecule type" value="Genomic_DNA"/>
</dbReference>
<dbReference type="EMBL" id="AF061403">
    <property type="protein sequence ID" value="AAC67507.1"/>
    <property type="status" value="ALT_SEQ"/>
    <property type="molecule type" value="Genomic_DNA"/>
</dbReference>
<dbReference type="EMBL" id="AF061404">
    <property type="protein sequence ID" value="AAC67508.1"/>
    <property type="status" value="ALT_SEQ"/>
    <property type="molecule type" value="Genomic_DNA"/>
</dbReference>
<dbReference type="EMBL" id="AF061405">
    <property type="protein sequence ID" value="AAC67509.1"/>
    <property type="status" value="ALT_SEQ"/>
    <property type="molecule type" value="Genomic_DNA"/>
</dbReference>
<dbReference type="EMBL" id="AF061406">
    <property type="protein sequence ID" value="AAC67510.1"/>
    <property type="status" value="ALT_SEQ"/>
    <property type="molecule type" value="Genomic_DNA"/>
</dbReference>
<dbReference type="EMBL" id="AF061407">
    <property type="protein sequence ID" value="AAC67511.1"/>
    <property type="status" value="ALT_SEQ"/>
    <property type="molecule type" value="Genomic_DNA"/>
</dbReference>
<dbReference type="EMBL" id="AF061408">
    <property type="protein sequence ID" value="AAC67512.1"/>
    <property type="status" value="ALT_SEQ"/>
    <property type="molecule type" value="Genomic_DNA"/>
</dbReference>
<dbReference type="EMBL" id="AF061409">
    <property type="protein sequence ID" value="AAC67513.1"/>
    <property type="status" value="ALT_SEQ"/>
    <property type="molecule type" value="Genomic_DNA"/>
</dbReference>
<dbReference type="EMBL" id="AF061410">
    <property type="protein sequence ID" value="AAC67514.1"/>
    <property type="status" value="ALT_SEQ"/>
    <property type="molecule type" value="Genomic_DNA"/>
</dbReference>
<dbReference type="EMBL" id="AF061411">
    <property type="protein sequence ID" value="AAC67515.1"/>
    <property type="status" value="ALT_SEQ"/>
    <property type="molecule type" value="Genomic_DNA"/>
</dbReference>
<dbReference type="EMBL" id="AF061412">
    <property type="protein sequence ID" value="AAC67516.1"/>
    <property type="status" value="ALT_SEQ"/>
    <property type="molecule type" value="Genomic_DNA"/>
</dbReference>
<dbReference type="EMBL" id="AF061413">
    <property type="protein sequence ID" value="AAC67517.1"/>
    <property type="status" value="ALT_SEQ"/>
    <property type="molecule type" value="Genomic_DNA"/>
</dbReference>
<dbReference type="EMBL" id="AF061414">
    <property type="protein sequence ID" value="AAC67518.1"/>
    <property type="status" value="ALT_SEQ"/>
    <property type="molecule type" value="Genomic_DNA"/>
</dbReference>
<dbReference type="EMBL" id="AF061415">
    <property type="protein sequence ID" value="AAC67519.1"/>
    <property type="status" value="ALT_SEQ"/>
    <property type="molecule type" value="Genomic_DNA"/>
</dbReference>
<dbReference type="PIR" id="E86389">
    <property type="entry name" value="E86389"/>
</dbReference>
<dbReference type="RefSeq" id="NP_564243.1">
    <property type="nucleotide sequence ID" value="NM_102395.3"/>
</dbReference>
<dbReference type="SMR" id="Q39081"/>
<dbReference type="BioGRID" id="24408">
    <property type="interactions" value="5"/>
</dbReference>
<dbReference type="DIP" id="DIP-33764N"/>
<dbReference type="FunCoup" id="Q39081">
    <property type="interactions" value="36"/>
</dbReference>
<dbReference type="IntAct" id="Q39081">
    <property type="interactions" value="6"/>
</dbReference>
<dbReference type="STRING" id="3702.Q39081"/>
<dbReference type="PaxDb" id="3702-AT1G26310.1"/>
<dbReference type="EnsemblPlants" id="AT1G26310.1">
    <property type="protein sequence ID" value="AT1G26310.1"/>
    <property type="gene ID" value="AT1G26310"/>
</dbReference>
<dbReference type="GeneID" id="839172"/>
<dbReference type="Gramene" id="AT1G26310.1">
    <property type="protein sequence ID" value="AT1G26310.1"/>
    <property type="gene ID" value="AT1G26310"/>
</dbReference>
<dbReference type="KEGG" id="ath:AT1G26310"/>
<dbReference type="Araport" id="AT1G26310"/>
<dbReference type="TAIR" id="AT1G26310">
    <property type="gene designation" value="CAL"/>
</dbReference>
<dbReference type="eggNOG" id="KOG0014">
    <property type="taxonomic scope" value="Eukaryota"/>
</dbReference>
<dbReference type="HOGENOM" id="CLU_053053_0_2_1"/>
<dbReference type="InParanoid" id="Q39081"/>
<dbReference type="OMA" id="NWSMEYS"/>
<dbReference type="PhylomeDB" id="Q39081"/>
<dbReference type="PRO" id="PR:Q39081"/>
<dbReference type="Proteomes" id="UP000006548">
    <property type="component" value="Chromosome 1"/>
</dbReference>
<dbReference type="ExpressionAtlas" id="Q39081">
    <property type="expression patterns" value="baseline and differential"/>
</dbReference>
<dbReference type="GO" id="GO:0005634">
    <property type="term" value="C:nucleus"/>
    <property type="evidence" value="ECO:0007669"/>
    <property type="project" value="UniProtKB-SubCell"/>
</dbReference>
<dbReference type="GO" id="GO:0003700">
    <property type="term" value="F:DNA-binding transcription factor activity"/>
    <property type="evidence" value="ECO:0000250"/>
    <property type="project" value="TAIR"/>
</dbReference>
<dbReference type="GO" id="GO:0046983">
    <property type="term" value="F:protein dimerization activity"/>
    <property type="evidence" value="ECO:0007669"/>
    <property type="project" value="InterPro"/>
</dbReference>
<dbReference type="GO" id="GO:0000977">
    <property type="term" value="F:RNA polymerase II transcription regulatory region sequence-specific DNA binding"/>
    <property type="evidence" value="ECO:0007669"/>
    <property type="project" value="InterPro"/>
</dbReference>
<dbReference type="GO" id="GO:0030154">
    <property type="term" value="P:cell differentiation"/>
    <property type="evidence" value="ECO:0007669"/>
    <property type="project" value="UniProtKB-KW"/>
</dbReference>
<dbReference type="GO" id="GO:0010582">
    <property type="term" value="P:floral meristem determinacy"/>
    <property type="evidence" value="ECO:0000270"/>
    <property type="project" value="TAIR"/>
</dbReference>
<dbReference type="GO" id="GO:0009911">
    <property type="term" value="P:positive regulation of flower development"/>
    <property type="evidence" value="ECO:0000304"/>
    <property type="project" value="TAIR"/>
</dbReference>
<dbReference type="GO" id="GO:0045944">
    <property type="term" value="P:positive regulation of transcription by RNA polymerase II"/>
    <property type="evidence" value="ECO:0007669"/>
    <property type="project" value="InterPro"/>
</dbReference>
<dbReference type="CDD" id="cd00265">
    <property type="entry name" value="MADS_MEF2_like"/>
    <property type="match status" value="1"/>
</dbReference>
<dbReference type="FunFam" id="3.40.1810.10:FF:000003">
    <property type="entry name" value="MADS-box transcription factor MADS-MC"/>
    <property type="match status" value="1"/>
</dbReference>
<dbReference type="Gene3D" id="3.40.1810.10">
    <property type="entry name" value="Transcription factor, MADS-box"/>
    <property type="match status" value="1"/>
</dbReference>
<dbReference type="InterPro" id="IPR050142">
    <property type="entry name" value="MADS-box/MEF2_TF"/>
</dbReference>
<dbReference type="InterPro" id="IPR033896">
    <property type="entry name" value="MEF2-like_N"/>
</dbReference>
<dbReference type="InterPro" id="IPR002487">
    <property type="entry name" value="TF_Kbox"/>
</dbReference>
<dbReference type="InterPro" id="IPR002100">
    <property type="entry name" value="TF_MADSbox"/>
</dbReference>
<dbReference type="InterPro" id="IPR036879">
    <property type="entry name" value="TF_MADSbox_sf"/>
</dbReference>
<dbReference type="PANTHER" id="PTHR48019">
    <property type="entry name" value="SERUM RESPONSE FACTOR HOMOLOG"/>
    <property type="match status" value="1"/>
</dbReference>
<dbReference type="Pfam" id="PF01486">
    <property type="entry name" value="K-box"/>
    <property type="match status" value="1"/>
</dbReference>
<dbReference type="Pfam" id="PF00319">
    <property type="entry name" value="SRF-TF"/>
    <property type="match status" value="1"/>
</dbReference>
<dbReference type="PRINTS" id="PR00404">
    <property type="entry name" value="MADSDOMAIN"/>
</dbReference>
<dbReference type="SMART" id="SM00432">
    <property type="entry name" value="MADS"/>
    <property type="match status" value="1"/>
</dbReference>
<dbReference type="SUPFAM" id="SSF55455">
    <property type="entry name" value="SRF-like"/>
    <property type="match status" value="1"/>
</dbReference>
<dbReference type="PROSITE" id="PS51297">
    <property type="entry name" value="K_BOX"/>
    <property type="match status" value="1"/>
</dbReference>
<dbReference type="PROSITE" id="PS00350">
    <property type="entry name" value="MADS_BOX_1"/>
    <property type="match status" value="1"/>
</dbReference>
<dbReference type="PROSITE" id="PS50066">
    <property type="entry name" value="MADS_BOX_2"/>
    <property type="match status" value="1"/>
</dbReference>
<gene>
    <name type="primary">CAL</name>
    <name type="synonym">AGL10</name>
    <name type="ordered locus">At1g26310</name>
    <name type="ORF">F28B23.24</name>
</gene>
<reference key="1">
    <citation type="journal article" date="1995" name="Science">
        <title>Molecular basis of the cauliflower phenotype in Arabidopsis.</title>
        <authorList>
            <person name="Kempin S.A."/>
            <person name="Savidge B."/>
            <person name="Yanofsky M.F."/>
        </authorList>
    </citation>
    <scope>NUCLEOTIDE SEQUENCE [GENOMIC DNA]</scope>
    <scope>MUTAGENESIS OF GLY-27; CYS-39; GLU-131; 151-GLU--ALA-255 AND 176-GLU--THR-186</scope>
    <source>
        <strain>cv. Landsberg erecta</strain>
    </source>
</reference>
<reference key="2">
    <citation type="journal article" date="2000" name="Nature">
        <title>Sequence and analysis of chromosome 1 of the plant Arabidopsis thaliana.</title>
        <authorList>
            <person name="Theologis A."/>
            <person name="Ecker J.R."/>
            <person name="Palm C.J."/>
            <person name="Federspiel N.A."/>
            <person name="Kaul S."/>
            <person name="White O."/>
            <person name="Alonso J."/>
            <person name="Altafi H."/>
            <person name="Araujo R."/>
            <person name="Bowman C.L."/>
            <person name="Brooks S.Y."/>
            <person name="Buehler E."/>
            <person name="Chan A."/>
            <person name="Chao Q."/>
            <person name="Chen H."/>
            <person name="Cheuk R.F."/>
            <person name="Chin C.W."/>
            <person name="Chung M.K."/>
            <person name="Conn L."/>
            <person name="Conway A.B."/>
            <person name="Conway A.R."/>
            <person name="Creasy T.H."/>
            <person name="Dewar K."/>
            <person name="Dunn P."/>
            <person name="Etgu P."/>
            <person name="Feldblyum T.V."/>
            <person name="Feng J.-D."/>
            <person name="Fong B."/>
            <person name="Fujii C.Y."/>
            <person name="Gill J.E."/>
            <person name="Goldsmith A.D."/>
            <person name="Haas B."/>
            <person name="Hansen N.F."/>
            <person name="Hughes B."/>
            <person name="Huizar L."/>
            <person name="Hunter J.L."/>
            <person name="Jenkins J."/>
            <person name="Johnson-Hopson C."/>
            <person name="Khan S."/>
            <person name="Khaykin E."/>
            <person name="Kim C.J."/>
            <person name="Koo H.L."/>
            <person name="Kremenetskaia I."/>
            <person name="Kurtz D.B."/>
            <person name="Kwan A."/>
            <person name="Lam B."/>
            <person name="Langin-Hooper S."/>
            <person name="Lee A."/>
            <person name="Lee J.M."/>
            <person name="Lenz C.A."/>
            <person name="Li J.H."/>
            <person name="Li Y.-P."/>
            <person name="Lin X."/>
            <person name="Liu S.X."/>
            <person name="Liu Z.A."/>
            <person name="Luros J.S."/>
            <person name="Maiti R."/>
            <person name="Marziali A."/>
            <person name="Militscher J."/>
            <person name="Miranda M."/>
            <person name="Nguyen M."/>
            <person name="Nierman W.C."/>
            <person name="Osborne B.I."/>
            <person name="Pai G."/>
            <person name="Peterson J."/>
            <person name="Pham P.K."/>
            <person name="Rizzo M."/>
            <person name="Rooney T."/>
            <person name="Rowley D."/>
            <person name="Sakano H."/>
            <person name="Salzberg S.L."/>
            <person name="Schwartz J.R."/>
            <person name="Shinn P."/>
            <person name="Southwick A.M."/>
            <person name="Sun H."/>
            <person name="Tallon L.J."/>
            <person name="Tambunga G."/>
            <person name="Toriumi M.J."/>
            <person name="Town C.D."/>
            <person name="Utterback T."/>
            <person name="Van Aken S."/>
            <person name="Vaysberg M."/>
            <person name="Vysotskaia V.S."/>
            <person name="Walker M."/>
            <person name="Wu D."/>
            <person name="Yu G."/>
            <person name="Fraser C.M."/>
            <person name="Venter J.C."/>
            <person name="Davis R.W."/>
        </authorList>
    </citation>
    <scope>NUCLEOTIDE SEQUENCE [LARGE SCALE GENOMIC DNA]</scope>
    <source>
        <strain>cv. Columbia</strain>
    </source>
</reference>
<reference key="3">
    <citation type="journal article" date="2017" name="Plant J.">
        <title>Araport11: a complete reannotation of the Arabidopsis thaliana reference genome.</title>
        <authorList>
            <person name="Cheng C.Y."/>
            <person name="Krishnakumar V."/>
            <person name="Chan A.P."/>
            <person name="Thibaud-Nissen F."/>
            <person name="Schobel S."/>
            <person name="Town C.D."/>
        </authorList>
    </citation>
    <scope>GENOME REANNOTATION</scope>
    <source>
        <strain>cv. Columbia</strain>
    </source>
</reference>
<reference key="4">
    <citation type="submission" date="2009-03" db="EMBL/GenBank/DDBJ databases">
        <title>ORF cloning and analysis of Arabidopsis transcription factor genes.</title>
        <authorList>
            <person name="Fujita M."/>
            <person name="Mizukado S."/>
            <person name="Seki M."/>
            <person name="Shinozaki K."/>
            <person name="Mitsuda N."/>
            <person name="Takiguchi Y."/>
            <person name="Takagi M."/>
        </authorList>
    </citation>
    <scope>NUCLEOTIDE SEQUENCE [LARGE SCALE MRNA]</scope>
</reference>
<reference key="5">
    <citation type="journal article" date="1998" name="Proc. Natl. Acad. Sci. U.S.A.">
        <title>Molecular population genetics of the Arabidopsis CAULIFLOWER regulatory gene: nonneutral evolution and naturally occurring variation in floral homeotic function.</title>
        <authorList>
            <person name="Purugganan M.D."/>
            <person name="Suddith J.I."/>
        </authorList>
    </citation>
    <scope>NUCLEOTIDE SEQUENCE [GENOMIC DNA] OF 64-255</scope>
    <scope>VARIANTS</scope>
    <source>
        <strain>cv. Bla-1</strain>
        <strain>cv. Bretagny</strain>
        <strain>cv. Bs-0</strain>
        <strain>cv. Bu-0</strain>
        <strain>cv. Bu-2</strain>
        <strain>cv. Ch-0</strain>
        <strain>cv. Co-1</strain>
        <strain>cv. Columbia</strain>
        <strain>cv. Firenzi</strain>
        <strain>cv. Kas-0</strain>
        <strain>cv. Kent</strain>
        <strain>cv. Landsberg erecta</strain>
        <strain>cv. Li-3</strain>
        <strain>cv. Li-8</strain>
        <strain>cv. Nd-0</strain>
        <strain>cv. NL2</strain>
        <strain>cv. Wassilewskija</strain>
    </source>
</reference>
<reference key="6">
    <citation type="journal article" date="1993" name="Development">
        <title>Control of flower development in Arabidopsis thaliana by APETALA1 and interacting genes.</title>
        <authorList>
            <person name="Bowman J.L."/>
            <person name="Alvarez J."/>
            <person name="Weigel D."/>
            <person name="Meyerowitz E.M."/>
            <person name="Smyth D.R."/>
        </authorList>
    </citation>
    <scope>FUNCTION</scope>
</reference>
<reference key="7">
    <citation type="journal article" date="2000" name="Development">
        <title>Redundant regulation of meristem identity and plant architecture by FRUITFULL, APETALA1 and CAULIFLOWER.</title>
        <authorList>
            <person name="Ferrandiz C."/>
            <person name="Gu Q."/>
            <person name="Martienssen R."/>
            <person name="Yanofsky M.F."/>
        </authorList>
    </citation>
    <scope>FUNCTION</scope>
</reference>
<evidence type="ECO:0000250" key="1"/>
<evidence type="ECO:0000255" key="2"/>
<evidence type="ECO:0000255" key="3">
    <source>
        <dbReference type="PROSITE-ProRule" id="PRU00251"/>
    </source>
</evidence>
<evidence type="ECO:0000255" key="4">
    <source>
        <dbReference type="PROSITE-ProRule" id="PRU00629"/>
    </source>
</evidence>
<evidence type="ECO:0000269" key="5">
    <source>
    </source>
</evidence>
<evidence type="ECO:0000269" key="6">
    <source>
    </source>
</evidence>
<evidence type="ECO:0000269" key="7">
    <source ref="6"/>
</evidence>
<evidence type="ECO:0000305" key="8"/>
<evidence type="ECO:0000305" key="9">
    <source>
    </source>
</evidence>
<feature type="chain" id="PRO_0000199480" description="Transcription factor CAULIFLOWER">
    <location>
        <begin position="1"/>
        <end position="255"/>
    </location>
</feature>
<feature type="domain" description="MADS-box" evidence="3">
    <location>
        <begin position="1"/>
        <end position="61"/>
    </location>
</feature>
<feature type="domain" description="K-box" evidence="4">
    <location>
        <begin position="90"/>
        <end position="180"/>
    </location>
</feature>
<feature type="coiled-coil region" evidence="2">
    <location>
        <begin position="90"/>
        <end position="198"/>
    </location>
</feature>
<feature type="sequence variant" description="In strain: cv. Kas-0.">
    <original>R</original>
    <variation>S</variation>
    <location>
        <position position="78"/>
    </location>
</feature>
<feature type="sequence variant" description="In strain: cv. Bu-0.">
    <original>Y</original>
    <variation>H</variation>
    <location>
        <position position="114"/>
    </location>
</feature>
<feature type="sequence variant" description="In strain: cv. Bretagny.">
    <original>E</original>
    <variation>G</variation>
    <location>
        <position position="120"/>
    </location>
</feature>
<feature type="sequence variant" description="In strain: cv. Kas-0.">
    <original>M</original>
    <variation>K</variation>
    <location>
        <position position="122"/>
    </location>
</feature>
<feature type="sequence variant" description="In strain: cv. Bu-0.">
    <original>I</original>
    <variation>T</variation>
    <location>
        <position position="141"/>
    </location>
</feature>
<feature type="sequence variant" description="In strain: cv. Kent.">
    <original>K</original>
    <variation>E</variation>
    <location>
        <position position="161"/>
    </location>
</feature>
<feature type="sequence variant" description="In strain: cv. Kent and cv. Wassilewskija.">
    <original>E</original>
    <variation>K</variation>
    <location>
        <position position="176"/>
    </location>
</feature>
<feature type="sequence variant" description="In strain: cv. Bu-0, cv. Landsberg erecta, cv. Li-8 and cv. NL2.">
    <original>R</original>
    <variation>K</variation>
    <location>
        <position position="182"/>
    </location>
</feature>
<feature type="sequence variant" description="In strain: cv. NL2.">
    <original>K</original>
    <variation>R</variation>
    <location>
        <position position="184"/>
    </location>
</feature>
<feature type="sequence variant" description="In strain: cv. Wassilewskija.">
    <original>T</original>
    <variation>I</variation>
    <location>
        <position position="186"/>
    </location>
</feature>
<feature type="sequence variant" description="In strain: cv. Co-1.">
    <original>V</original>
    <variation>I</variation>
    <location>
        <position position="195"/>
    </location>
</feature>
<feature type="sequence variant" description="In strain: cv. Kent.">
    <original>D</original>
    <variation>N</variation>
    <location>
        <position position="196"/>
    </location>
</feature>
<feature type="sequence variant" description="In strain: cv. Bu-2.">
    <original>Q</original>
    <variation>QL</variation>
    <location>
        <position position="205"/>
    </location>
</feature>
<feature type="sequence variant" description="In strain: cv. Li-3.">
    <original>L</original>
    <variation>F</variation>
    <location>
        <position position="209"/>
    </location>
</feature>
<feature type="sequence variant" description="In strain: cv. Bla-1, cv. Bretagny, cv. Bs-0, cv. Bu-0, cv. Bu-2, cv. Co-1, cv. Kas-0, cv. Kent, cv. Landsberg erecta, cv. Li-3, cv. Li-8, cv. Nd-0, cv. NL2 and cv. Wassilewskija.">
    <original>E</original>
    <variation>G</variation>
    <location>
        <position position="228"/>
    </location>
</feature>
<feature type="sequence variant" description="In strain: cv. Bu-2.">
    <original>N</original>
    <variation>D</variation>
    <location>
        <position position="238"/>
    </location>
</feature>
<feature type="sequence variant" description="In strain: cv. NL2.">
    <original>Y</original>
    <variation>C</variation>
    <location>
        <position position="249"/>
    </location>
</feature>
<feature type="mutagenesis site" description="In cal-3; no visible phenotype. 'Cauliflower' shape when associated with AP1 disruption." evidence="6">
    <original>G</original>
    <variation>D</variation>
    <location>
        <position position="27"/>
    </location>
</feature>
<feature type="mutagenesis site" description="In cal-2; no visible phenotype. 'Cauliflower' shape when associated with AP1 disruption." evidence="6">
    <original>C</original>
    <variation>Y</variation>
    <location>
        <position position="39"/>
    </location>
</feature>
<feature type="mutagenesis site" description="In cal-4; no visible phenotype. 'Cauliflower' shape when associated with AP1 disruption." evidence="6">
    <original>E</original>
    <variation>K</variation>
    <location>
        <position position="131"/>
    </location>
</feature>
<feature type="mutagenesis site" description="In cal-5; 'Cauliflower' shape." evidence="6">
    <location>
        <begin position="151"/>
        <end position="255"/>
    </location>
</feature>
<feature type="mutagenesis site" description="In cal-1; no visible phenotype. 'Cauliflower' shape when associated with AP1 disruption." evidence="6">
    <original>ERENILRTKQT</original>
    <variation>KRENILRTRQI</variation>
    <location>
        <begin position="176"/>
        <end position="186"/>
    </location>
</feature>
<protein>
    <recommendedName>
        <fullName>Transcription factor CAULIFLOWER</fullName>
        <shortName>AtCAL</shortName>
    </recommendedName>
    <alternativeName>
        <fullName>Agamous-like MADS-box protein AGL10</fullName>
    </alternativeName>
</protein>
<organism>
    <name type="scientific">Arabidopsis thaliana</name>
    <name type="common">Mouse-ear cress</name>
    <dbReference type="NCBI Taxonomy" id="3702"/>
    <lineage>
        <taxon>Eukaryota</taxon>
        <taxon>Viridiplantae</taxon>
        <taxon>Streptophyta</taxon>
        <taxon>Embryophyta</taxon>
        <taxon>Tracheophyta</taxon>
        <taxon>Spermatophyta</taxon>
        <taxon>Magnoliopsida</taxon>
        <taxon>eudicotyledons</taxon>
        <taxon>Gunneridae</taxon>
        <taxon>Pentapetalae</taxon>
        <taxon>rosids</taxon>
        <taxon>malvids</taxon>
        <taxon>Brassicales</taxon>
        <taxon>Brassicaceae</taxon>
        <taxon>Camelineae</taxon>
        <taxon>Arabidopsis</taxon>
    </lineage>
</organism>
<sequence>MGRGRVELKRIENKINRQVTFSKRRTGLLKKAQEISVLCDAEVSLIVFSHKGKLFEYSSESCMEKVLERYERYSYAERQLIAPDSHVNAQTNWSMEYSRLKAKIELLERNQRHYLGEELEPMSLKDLQNLEQQLETALKHIRSRKNQLMNESLNHLQRKEKEIQEENSMLTKQIKERENILRTKQTQCEQLNRSVDDVPQPQPFQHPHLYMIAHQTSPFLNMGGLYQEEDQTAMRRNNLDLTLEPIYNYLGCYAA</sequence>
<keyword id="KW-0010">Activator</keyword>
<keyword id="KW-0175">Coiled coil</keyword>
<keyword id="KW-0217">Developmental protein</keyword>
<keyword id="KW-0221">Differentiation</keyword>
<keyword id="KW-0238">DNA-binding</keyword>
<keyword id="KW-0287">Flowering</keyword>
<keyword id="KW-0539">Nucleus</keyword>
<keyword id="KW-1185">Reference proteome</keyword>
<keyword id="KW-0804">Transcription</keyword>
<keyword id="KW-0805">Transcription regulation</keyword>
<name>CAL_ARATH</name>
<accession>Q39081</accession>
<accession>C0SUX4</accession>
<accession>Q9C675</accession>
<accession>Q9S779</accession>
<accession>Q9S780</accession>
<accession>Q9SBG8</accession>
<accession>Q9SBG9</accession>
<accession>Q9SBH0</accession>
<accession>Q9SBH1</accession>
<accession>Q9SBH2</accession>
<accession>Q9SBH3</accession>
<accession>Q9SBH4</accession>
<accession>Q9SBH5</accession>
<accession>Q9SBH6</accession>
<proteinExistence type="evidence at protein level"/>
<comment type="function">
    <text evidence="5 7">Probable transcription factor that promotes early floral meristem identity in synergy with APETALA1, FRUITFULL and LEAFY. Is required subsequently for the transition of an inflorescence meristem into a floral meristem. Seems to be partially redundant to the function of APETALA1. Positively regulates the APETALA1 and LEAFY expression.</text>
</comment>
<comment type="subunit">
    <text evidence="1">Homodimer capable of binding to CArG-box sequences.</text>
</comment>
<comment type="interaction">
    <interactant intactId="EBI-592136">
        <id>Q39081</id>
    </interactant>
    <interactant intactId="EBI-592041">
        <id>O64645</id>
        <label>SOC1</label>
    </interactant>
    <organismsDiffer>false</organismsDiffer>
    <experiments>4</experiments>
</comment>
<comment type="subcellular location">
    <subcellularLocation>
        <location>Nucleus</location>
    </subcellularLocation>
</comment>
<comment type="tissue specificity">
    <text>Expressed in young flower primordia.</text>
</comment>
<comment type="developmental stage">
    <text>Expressed at an early stage of floral initiation.</text>
</comment>
<comment type="miscellaneous">
    <text evidence="9">Mutations in the CAL gene result in a characteristic proliferation of inflorescence meristems in place of floral meristems. The fragment expressed in cal-5 mutant is homolog to the CAL proteins present in Brassica oleracea var. botrytis and may thus explain the 'cauliflower'-shaped floral meristem (PubMed:7824951).</text>
</comment>
<comment type="sequence caution" evidence="8">
    <conflict type="erroneous gene model prediction">
        <sequence resource="EMBL-CDS" id="AAA64789"/>
    </conflict>
</comment>
<comment type="sequence caution" evidence="8">
    <conflict type="erroneous gene model prediction">
        <sequence resource="EMBL-CDS" id="AAC67505"/>
    </conflict>
</comment>
<comment type="sequence caution" evidence="8">
    <conflict type="erroneous gene model prediction">
        <sequence resource="EMBL-CDS" id="AAC67506"/>
    </conflict>
</comment>
<comment type="sequence caution" evidence="8">
    <conflict type="erroneous gene model prediction">
        <sequence resource="EMBL-CDS" id="AAC67507"/>
    </conflict>
</comment>
<comment type="sequence caution" evidence="8">
    <conflict type="erroneous gene model prediction">
        <sequence resource="EMBL-CDS" id="AAC67508"/>
    </conflict>
</comment>
<comment type="sequence caution" evidence="8">
    <conflict type="erroneous gene model prediction">
        <sequence resource="EMBL-CDS" id="AAC67509"/>
    </conflict>
</comment>
<comment type="sequence caution" evidence="8">
    <conflict type="erroneous gene model prediction">
        <sequence resource="EMBL-CDS" id="AAC67510"/>
    </conflict>
</comment>
<comment type="sequence caution" evidence="8">
    <conflict type="erroneous gene model prediction">
        <sequence resource="EMBL-CDS" id="AAC67511"/>
    </conflict>
</comment>
<comment type="sequence caution" evidence="8">
    <conflict type="erroneous gene model prediction">
        <sequence resource="EMBL-CDS" id="AAC67512"/>
    </conflict>
</comment>
<comment type="sequence caution" evidence="8">
    <conflict type="erroneous gene model prediction">
        <sequence resource="EMBL-CDS" id="AAC67513"/>
    </conflict>
</comment>
<comment type="sequence caution" evidence="8">
    <conflict type="erroneous gene model prediction">
        <sequence resource="EMBL-CDS" id="AAC67514"/>
    </conflict>
</comment>
<comment type="sequence caution" evidence="8">
    <conflict type="erroneous gene model prediction">
        <sequence resource="EMBL-CDS" id="AAC67515"/>
    </conflict>
</comment>
<comment type="sequence caution" evidence="8">
    <conflict type="erroneous gene model prediction">
        <sequence resource="EMBL-CDS" id="AAC67516"/>
    </conflict>
</comment>
<comment type="sequence caution" evidence="8">
    <conflict type="erroneous gene model prediction">
        <sequence resource="EMBL-CDS" id="AAC67517"/>
    </conflict>
</comment>
<comment type="sequence caution" evidence="8">
    <conflict type="erroneous gene model prediction">
        <sequence resource="EMBL-CDS" id="AAC67518"/>
    </conflict>
</comment>
<comment type="sequence caution" evidence="8">
    <conflict type="erroneous gene model prediction">
        <sequence resource="EMBL-CDS" id="AAC67519"/>
    </conflict>
</comment>
<comment type="sequence caution" evidence="8">
    <conflict type="erroneous gene model prediction">
        <sequence resource="EMBL-CDS" id="AAG50679"/>
    </conflict>
</comment>